<proteinExistence type="evidence at transcript level"/>
<evidence type="ECO:0000269" key="1">
    <source ref="4"/>
</evidence>
<evidence type="ECO:0000303" key="2">
    <source ref="4"/>
</evidence>
<evidence type="ECO:0000312" key="3">
    <source>
        <dbReference type="Araport" id="AT2G22660"/>
    </source>
</evidence>
<evidence type="ECO:0000312" key="4">
    <source>
        <dbReference type="EMBL" id="AAD15574.1"/>
    </source>
</evidence>
<evidence type="ECO:0000312" key="5">
    <source>
        <dbReference type="Proteomes" id="UP000006548"/>
    </source>
</evidence>
<keyword id="KW-0938">Abscisic acid signaling pathway</keyword>
<keyword id="KW-0025">Alternative splicing</keyword>
<keyword id="KW-1185">Reference proteome</keyword>
<keyword id="KW-0346">Stress response</keyword>
<comment type="function">
    <text evidence="1">Plays a regulatory role in abscisic acid (ABA) signaling and tolerance to abiotic stress during germination. May be involved in the regulation of the ABI transcriptional factors.</text>
</comment>
<comment type="alternative products">
    <event type="alternative splicing"/>
    <isoform>
        <id>Q9ZQ47-1</id>
        <name>1</name>
        <sequence type="displayed"/>
    </isoform>
    <isoform>
        <id>Q9ZQ47-2</id>
        <name>2</name>
        <sequence type="described" ref="VSP_057611 VSP_057612"/>
    </isoform>
</comment>
<comment type="induction">
    <text evidence="1">Up-regulated upon salt, osmotic, glucose or exogenous abscisic acid treatment.</text>
</comment>
<comment type="disruption phenotype">
    <text evidence="1">Increased sensitivity to salt and osmotic stress in germination and cotyledon development. Abscisic acid hypersensitivity.</text>
</comment>
<name>GRDP1_ARATH</name>
<protein>
    <recommendedName>
        <fullName evidence="2">Glycine-rich domain-containing protein 1</fullName>
        <shortName evidence="2">AtGRDP1</shortName>
    </recommendedName>
</protein>
<sequence length="819" mass="89487">MDKEKDHEVEWLEAQKIEISVDLLAAAKQHLLFLETVDRNRWLYDGPALEKAIYRYNACWLPLLVKYSESSSVSEGSLVPPLDCEWIWHCHRLNPVRYNSDCEQFYGRVLDNSGVLSSVDGNCKLKTEDLWKRLYPDEPYELDLDNIDLEDISEKSSALEKCTKYDLVSAVKRQSPFYYQVSRSHVNSDIFLQEAVARYKGFLYLIKMNRERSLKRFCVPTYDVDLIWHTHQLHPVSYCDDMVKLIGKVLEHDDTDSDRGKGKKLDTGFSKTTAQWEETFGTRYWKAGAMHRGKTPVPVTNSPYASDVLVKDPTAKDDFQNLIQFPEVEVVEVLLEIIGVRNLPDGHKGKVSVMFSKTQPDSLFNAERRLTILSEVGEKQVATFQCEPTGELVFKLISCSPSKIPVSREPKNLGFASLSLKEFLFPVITQLSVEKWLELTPSKGSQTDTKPISLRVAVSFTPPVRSPSVLHMVQSRPSCKGSCFFPIIGKSRLAKSSTHIVDETQTEVITLQIRNSADGGILKDDQRQVMGVTDSGETRVLAVYTGSFWSLLDSKWSLKQINASTADNPLFEILGPRVVKIFSGRKLDYEPKHCANLRSDLDFMTLVEFSKQHPYGKTVGLVDMRFGSIEAKENWLLLPGIVSAFILHTVLKKGGSEGFNVTTKDIKEESKQTKLVAATENNVNANSTNVETQTAITAPKKGSGCGGGCSGECGNMVKAANASGCGSSCSGECGDMVKSAANASGCGSGCSGECGNMVKAANASGGGYGARCKAAKASGCGGGCGGGCGGGCGDMVKSVNASGCGGGCNGECGNMVKAA</sequence>
<gene>
    <name evidence="2" type="primary">GRDP1</name>
    <name evidence="3" type="ordered locus">At2g22660</name>
    <name evidence="4" type="ORF">T9I22.10</name>
</gene>
<accession>Q9ZQ47</accession>
<accession>F4IJL4</accession>
<dbReference type="EMBL" id="AC006340">
    <property type="protein sequence ID" value="AAD15574.1"/>
    <property type="molecule type" value="Genomic_DNA"/>
</dbReference>
<dbReference type="EMBL" id="CP002685">
    <property type="protein sequence ID" value="AEC07334.1"/>
    <property type="molecule type" value="Genomic_DNA"/>
</dbReference>
<dbReference type="EMBL" id="CP002685">
    <property type="protein sequence ID" value="AEC07335.1"/>
    <property type="molecule type" value="Genomic_DNA"/>
</dbReference>
<dbReference type="EMBL" id="AY070719">
    <property type="status" value="NOT_ANNOTATED_CDS"/>
    <property type="molecule type" value="mRNA"/>
</dbReference>
<dbReference type="PIR" id="C84615">
    <property type="entry name" value="C84615"/>
</dbReference>
<dbReference type="RefSeq" id="NP_001031396.1">
    <molecule id="Q9ZQ47-1"/>
    <property type="nucleotide sequence ID" value="NM_001036319.2"/>
</dbReference>
<dbReference type="RefSeq" id="NP_179851.2">
    <molecule id="Q9ZQ47-2"/>
    <property type="nucleotide sequence ID" value="NM_127831.3"/>
</dbReference>
<dbReference type="SMR" id="Q9ZQ47"/>
<dbReference type="FunCoup" id="Q9ZQ47">
    <property type="interactions" value="1004"/>
</dbReference>
<dbReference type="IntAct" id="Q9ZQ47">
    <property type="interactions" value="2"/>
</dbReference>
<dbReference type="STRING" id="3702.Q9ZQ47"/>
<dbReference type="SwissPalm" id="Q9ZQ47"/>
<dbReference type="PaxDb" id="3702-AT2G22660.2"/>
<dbReference type="ProteomicsDB" id="220596">
    <molecule id="Q9ZQ47-1"/>
</dbReference>
<dbReference type="EnsemblPlants" id="AT2G22660.1">
    <molecule id="Q9ZQ47-2"/>
    <property type="protein sequence ID" value="AT2G22660.1"/>
    <property type="gene ID" value="AT2G22660"/>
</dbReference>
<dbReference type="EnsemblPlants" id="AT2G22660.2">
    <molecule id="Q9ZQ47-1"/>
    <property type="protein sequence ID" value="AT2G22660.2"/>
    <property type="gene ID" value="AT2G22660"/>
</dbReference>
<dbReference type="GeneID" id="816797"/>
<dbReference type="Gramene" id="AT2G22660.1">
    <molecule id="Q9ZQ47-2"/>
    <property type="protein sequence ID" value="AT2G22660.1"/>
    <property type="gene ID" value="AT2G22660"/>
</dbReference>
<dbReference type="Gramene" id="AT2G22660.2">
    <molecule id="Q9ZQ47-1"/>
    <property type="protein sequence ID" value="AT2G22660.2"/>
    <property type="gene ID" value="AT2G22660"/>
</dbReference>
<dbReference type="KEGG" id="ath:AT2G22660"/>
<dbReference type="Araport" id="AT2G22660"/>
<dbReference type="TAIR" id="AT2G22660">
    <property type="gene designation" value="ATGRDP1"/>
</dbReference>
<dbReference type="eggNOG" id="ENOG502QRQZ">
    <property type="taxonomic scope" value="Eukaryota"/>
</dbReference>
<dbReference type="HOGENOM" id="CLU_011059_0_0_1"/>
<dbReference type="InParanoid" id="Q9ZQ47"/>
<dbReference type="OMA" id="HEHQKIM"/>
<dbReference type="PhylomeDB" id="Q9ZQ47"/>
<dbReference type="PRO" id="PR:Q9ZQ47"/>
<dbReference type="Proteomes" id="UP000006548">
    <property type="component" value="Chromosome 2"/>
</dbReference>
<dbReference type="ExpressionAtlas" id="Q9ZQ47">
    <property type="expression patterns" value="baseline and differential"/>
</dbReference>
<dbReference type="GO" id="GO:0005886">
    <property type="term" value="C:plasma membrane"/>
    <property type="evidence" value="ECO:0007005"/>
    <property type="project" value="TAIR"/>
</dbReference>
<dbReference type="GO" id="GO:0009738">
    <property type="term" value="P:abscisic acid-activated signaling pathway"/>
    <property type="evidence" value="ECO:0007669"/>
    <property type="project" value="UniProtKB-KW"/>
</dbReference>
<dbReference type="GO" id="GO:0071470">
    <property type="term" value="P:cellular response to osmotic stress"/>
    <property type="evidence" value="ECO:0000315"/>
    <property type="project" value="UniProtKB"/>
</dbReference>
<dbReference type="GO" id="GO:0009787">
    <property type="term" value="P:regulation of abscisic acid-activated signaling pathway"/>
    <property type="evidence" value="ECO:0000315"/>
    <property type="project" value="UniProtKB"/>
</dbReference>
<dbReference type="InterPro" id="IPR009836">
    <property type="entry name" value="GRDP-like"/>
</dbReference>
<dbReference type="PANTHER" id="PTHR34365">
    <property type="entry name" value="ENOLASE (DUF1399)"/>
    <property type="match status" value="1"/>
</dbReference>
<dbReference type="PANTHER" id="PTHR34365:SF7">
    <property type="entry name" value="GLYCINE-RICH DOMAIN-CONTAINING PROTEIN 1"/>
    <property type="match status" value="1"/>
</dbReference>
<dbReference type="Pfam" id="PF25334">
    <property type="entry name" value="C2_GRDP"/>
    <property type="match status" value="1"/>
</dbReference>
<dbReference type="Pfam" id="PF07173">
    <property type="entry name" value="GRDP-like"/>
    <property type="match status" value="2"/>
</dbReference>
<dbReference type="Pfam" id="PF25335">
    <property type="entry name" value="GRDP_C"/>
    <property type="match status" value="1"/>
</dbReference>
<reference key="1">
    <citation type="journal article" date="1999" name="Nature">
        <title>Sequence and analysis of chromosome 2 of the plant Arabidopsis thaliana.</title>
        <authorList>
            <person name="Lin X."/>
            <person name="Kaul S."/>
            <person name="Rounsley S.D."/>
            <person name="Shea T.P."/>
            <person name="Benito M.-I."/>
            <person name="Town C.D."/>
            <person name="Fujii C.Y."/>
            <person name="Mason T.M."/>
            <person name="Bowman C.L."/>
            <person name="Barnstead M.E."/>
            <person name="Feldblyum T.V."/>
            <person name="Buell C.R."/>
            <person name="Ketchum K.A."/>
            <person name="Lee J.J."/>
            <person name="Ronning C.M."/>
            <person name="Koo H.L."/>
            <person name="Moffat K.S."/>
            <person name="Cronin L.A."/>
            <person name="Shen M."/>
            <person name="Pai G."/>
            <person name="Van Aken S."/>
            <person name="Umayam L."/>
            <person name="Tallon L.J."/>
            <person name="Gill J.E."/>
            <person name="Adams M.D."/>
            <person name="Carrera A.J."/>
            <person name="Creasy T.H."/>
            <person name="Goodman H.M."/>
            <person name="Somerville C.R."/>
            <person name="Copenhaver G.P."/>
            <person name="Preuss D."/>
            <person name="Nierman W.C."/>
            <person name="White O."/>
            <person name="Eisen J.A."/>
            <person name="Salzberg S.L."/>
            <person name="Fraser C.M."/>
            <person name="Venter J.C."/>
        </authorList>
    </citation>
    <scope>NUCLEOTIDE SEQUENCE [LARGE SCALE GENOMIC DNA]</scope>
    <source>
        <strain>cv. Columbia</strain>
    </source>
</reference>
<reference key="2">
    <citation type="journal article" date="2017" name="Plant J.">
        <title>Araport11: a complete reannotation of the Arabidopsis thaliana reference genome.</title>
        <authorList>
            <person name="Cheng C.Y."/>
            <person name="Krishnakumar V."/>
            <person name="Chan A.P."/>
            <person name="Thibaud-Nissen F."/>
            <person name="Schobel S."/>
            <person name="Town C.D."/>
        </authorList>
    </citation>
    <scope>GENOME REANNOTATION</scope>
    <source>
        <strain>cv. Columbia</strain>
    </source>
</reference>
<reference key="3">
    <citation type="journal article" date="2003" name="Science">
        <title>Empirical analysis of transcriptional activity in the Arabidopsis genome.</title>
        <authorList>
            <person name="Yamada K."/>
            <person name="Lim J."/>
            <person name="Dale J.M."/>
            <person name="Chen H."/>
            <person name="Shinn P."/>
            <person name="Palm C.J."/>
            <person name="Southwick A.M."/>
            <person name="Wu H.C."/>
            <person name="Kim C.J."/>
            <person name="Nguyen M."/>
            <person name="Pham P.K."/>
            <person name="Cheuk R.F."/>
            <person name="Karlin-Newmann G."/>
            <person name="Liu S.X."/>
            <person name="Lam B."/>
            <person name="Sakano H."/>
            <person name="Wu T."/>
            <person name="Yu G."/>
            <person name="Miranda M."/>
            <person name="Quach H.L."/>
            <person name="Tripp M."/>
            <person name="Chang C.H."/>
            <person name="Lee J.M."/>
            <person name="Toriumi M.J."/>
            <person name="Chan M.M."/>
            <person name="Tang C.C."/>
            <person name="Onodera C.S."/>
            <person name="Deng J.M."/>
            <person name="Akiyama K."/>
            <person name="Ansari Y."/>
            <person name="Arakawa T."/>
            <person name="Banh J."/>
            <person name="Banno F."/>
            <person name="Bowser L."/>
            <person name="Brooks S.Y."/>
            <person name="Carninci P."/>
            <person name="Chao Q."/>
            <person name="Choy N."/>
            <person name="Enju A."/>
            <person name="Goldsmith A.D."/>
            <person name="Gurjal M."/>
            <person name="Hansen N.F."/>
            <person name="Hayashizaki Y."/>
            <person name="Johnson-Hopson C."/>
            <person name="Hsuan V.W."/>
            <person name="Iida K."/>
            <person name="Karnes M."/>
            <person name="Khan S."/>
            <person name="Koesema E."/>
            <person name="Ishida J."/>
            <person name="Jiang P.X."/>
            <person name="Jones T."/>
            <person name="Kawai J."/>
            <person name="Kamiya A."/>
            <person name="Meyers C."/>
            <person name="Nakajima M."/>
            <person name="Narusaka M."/>
            <person name="Seki M."/>
            <person name="Sakurai T."/>
            <person name="Satou M."/>
            <person name="Tamse R."/>
            <person name="Vaysberg M."/>
            <person name="Wallender E.K."/>
            <person name="Wong C."/>
            <person name="Yamamura Y."/>
            <person name="Yuan S."/>
            <person name="Shinozaki K."/>
            <person name="Davis R.W."/>
            <person name="Theologis A."/>
            <person name="Ecker J.R."/>
        </authorList>
    </citation>
    <scope>NUCLEOTIDE SEQUENCE [LARGE SCALE MRNA] (ISOFORM 2)</scope>
    <source>
        <strain>cv. Columbia</strain>
    </source>
</reference>
<reference key="4">
    <citation type="journal article" date="2014" name="Plant Mol. Biol. Rep.">
        <title>AtGRDP1 gene encoding a glycine-rich domain protein is involved in germination and responds to ABA signalling.</title>
        <authorList>
            <person name="Rodriguez-Hernandez A.A."/>
            <person name="Ortega-Amaro M.A."/>
            <person name="Delgado-Sanchez P."/>
            <person name="Salinas J."/>
            <person name="Jimenez-Bremont J.F."/>
        </authorList>
    </citation>
    <scope>FUNCTION</scope>
    <scope>DISRUPTION PHENOTYPE</scope>
    <scope>INDUCTION</scope>
    <source>
        <strain>cv. Columbia</strain>
    </source>
</reference>
<feature type="chain" id="PRO_0000432852" description="Glycine-rich domain-containing protein 1">
    <location>
        <begin position="1"/>
        <end position="819"/>
    </location>
</feature>
<feature type="splice variant" id="VSP_057611" description="In isoform 2.">
    <original>KIFSGRK</original>
    <variation>YSTILFQ</variation>
    <location>
        <begin position="580"/>
        <end position="586"/>
    </location>
</feature>
<feature type="splice variant" id="VSP_057612" description="In isoform 2.">
    <location>
        <begin position="587"/>
        <end position="819"/>
    </location>
</feature>
<organism evidence="5">
    <name type="scientific">Arabidopsis thaliana</name>
    <name type="common">Mouse-ear cress</name>
    <dbReference type="NCBI Taxonomy" id="3702"/>
    <lineage>
        <taxon>Eukaryota</taxon>
        <taxon>Viridiplantae</taxon>
        <taxon>Streptophyta</taxon>
        <taxon>Embryophyta</taxon>
        <taxon>Tracheophyta</taxon>
        <taxon>Spermatophyta</taxon>
        <taxon>Magnoliopsida</taxon>
        <taxon>eudicotyledons</taxon>
        <taxon>Gunneridae</taxon>
        <taxon>Pentapetalae</taxon>
        <taxon>rosids</taxon>
        <taxon>malvids</taxon>
        <taxon>Brassicales</taxon>
        <taxon>Brassicaceae</taxon>
        <taxon>Camelineae</taxon>
        <taxon>Arabidopsis</taxon>
    </lineage>
</organism>